<evidence type="ECO:0000250" key="1">
    <source>
        <dbReference type="UniProtKB" id="A8Q2D1"/>
    </source>
</evidence>
<evidence type="ECO:0000250" key="2">
    <source>
        <dbReference type="UniProtKB" id="P07584"/>
    </source>
</evidence>
<evidence type="ECO:0000250" key="3">
    <source>
        <dbReference type="UniProtKB" id="P13497"/>
    </source>
</evidence>
<evidence type="ECO:0000255" key="4"/>
<evidence type="ECO:0000255" key="5">
    <source>
        <dbReference type="PROSITE-ProRule" id="PRU01005"/>
    </source>
</evidence>
<evidence type="ECO:0000255" key="6">
    <source>
        <dbReference type="PROSITE-ProRule" id="PRU01211"/>
    </source>
</evidence>
<evidence type="ECO:0000269" key="7">
    <source>
    </source>
</evidence>
<evidence type="ECO:0000269" key="8">
    <source>
    </source>
</evidence>
<evidence type="ECO:0000305" key="9"/>
<sequence>MLLPWIITIVTVIPATLGHRNRVQDDEMLVISDSTDSLNLEDFEFADKLTREELFGKHIPVEVVNDFKSDIRLPRRHKRNGVSRAAKLWPNARIPYAISPHYSPHERALLAKAVKQYHEKTCIRFVPRQTGEPDYLFIGKVDGCFSEVGRTSGVQVLSLDNGCMEYATIIHEMMHVVGFYHEHERWDRDNFIDIIWQNIDRGALDQFGKVDLSKTSYYGQPYDYKSILHYDSLAFSKNGFPTMLPKVKSATIGNARDFSDVDISKINRMYNCPVEKSVTAPFARARHVPIYSPQYHKYEDRPKIPLRSFDMQQGPINPPMAQIPSQSLVVSSSSGRVNYNSNKPSSQCEDRITVCWWTADRCRSPAIYQVMSSLCPKTCKFC</sequence>
<gene>
    <name type="primary">nas-7</name>
    <name type="ORF">C07D10.4</name>
</gene>
<reference key="1">
    <citation type="journal article" date="1998" name="Science">
        <title>Genome sequence of the nematode C. elegans: a platform for investigating biology.</title>
        <authorList>
            <consortium name="The C. elegans sequencing consortium"/>
        </authorList>
    </citation>
    <scope>NUCLEOTIDE SEQUENCE [LARGE SCALE GENOMIC DNA]</scope>
    <source>
        <strain>Bristol N2</strain>
    </source>
</reference>
<reference key="2">
    <citation type="journal article" date="2003" name="Eur. J. Biochem.">
        <title>The astacin protein family in Caenorhabditis elegans.</title>
        <authorList>
            <person name="Moehrlen F."/>
            <person name="Hutter H."/>
            <person name="Zwilling R."/>
        </authorList>
    </citation>
    <scope>NUCLEOTIDE SEQUENCE [MRNA] OF 61-339</scope>
    <scope>TISSUE SPECIFICITY</scope>
    <scope>DEVELOPMENTAL STAGE</scope>
    <scope>NOMENCLATURE</scope>
    <source>
        <strain>Bristol N2</strain>
    </source>
</reference>
<reference key="3">
    <citation type="journal article" date="2010" name="BMC Dev. Biol.">
        <title>Characterization of the astacin family of metalloproteases in C. elegans.</title>
        <authorList>
            <person name="Park J.O."/>
            <person name="Pan J."/>
            <person name="Moehrlen F."/>
            <person name="Schupp M.O."/>
            <person name="Johnsen R."/>
            <person name="Baillie D.L."/>
            <person name="Zapf R."/>
            <person name="Moerman D.G."/>
            <person name="Hutter H."/>
        </authorList>
    </citation>
    <scope>TISSUE SPECIFICITY</scope>
    <scope>DISRUPTION PHENOTYPE</scope>
</reference>
<proteinExistence type="evidence at transcript level"/>
<organism>
    <name type="scientific">Caenorhabditis elegans</name>
    <dbReference type="NCBI Taxonomy" id="6239"/>
    <lineage>
        <taxon>Eukaryota</taxon>
        <taxon>Metazoa</taxon>
        <taxon>Ecdysozoa</taxon>
        <taxon>Nematoda</taxon>
        <taxon>Chromadorea</taxon>
        <taxon>Rhabditida</taxon>
        <taxon>Rhabditina</taxon>
        <taxon>Rhabditomorpha</taxon>
        <taxon>Rhabditoidea</taxon>
        <taxon>Rhabditidae</taxon>
        <taxon>Peloderinae</taxon>
        <taxon>Caenorhabditis</taxon>
    </lineage>
</organism>
<comment type="function">
    <text evidence="2">Metalloprotease.</text>
</comment>
<comment type="cofactor">
    <cofactor evidence="6">
        <name>Zn(2+)</name>
        <dbReference type="ChEBI" id="CHEBI:29105"/>
    </cofactor>
    <text evidence="6">Binds 1 zinc ion per subunit.</text>
</comment>
<comment type="subcellular location">
    <subcellularLocation>
        <location evidence="9">Secreted</location>
    </subcellularLocation>
</comment>
<comment type="tissue specificity">
    <text evidence="7">Expressed in the head of adult hermaphrodites but not within pharynx cells (PubMed:14653817). Expressed in pharyngeal muscles, mc cells, intestine, hypodermal seam cells, arcade cells, spermatheca, vulva and rectal epithelial cells (PubMed:20109220).</text>
</comment>
<comment type="developmental stage">
    <text evidence="7">In the embryo, expression is detected just before hatching.</text>
</comment>
<comment type="disruption phenotype">
    <text evidence="8">No visible phenotype. In a nas-6 (hd108) mutant background, enhances slow growth of nas-6 single mutant.</text>
</comment>
<name>NAS7_CAEEL</name>
<keyword id="KW-0165">Cleavage on pair of basic residues</keyword>
<keyword id="KW-1015">Disulfide bond</keyword>
<keyword id="KW-0378">Hydrolase</keyword>
<keyword id="KW-0479">Metal-binding</keyword>
<keyword id="KW-0482">Metalloprotease</keyword>
<keyword id="KW-0645">Protease</keyword>
<keyword id="KW-1185">Reference proteome</keyword>
<keyword id="KW-0964">Secreted</keyword>
<keyword id="KW-0732">Signal</keyword>
<keyword id="KW-0862">Zinc</keyword>
<keyword id="KW-0865">Zymogen</keyword>
<feature type="signal peptide" evidence="4">
    <location>
        <begin position="1"/>
        <end position="18"/>
    </location>
</feature>
<feature type="propeptide" id="PRO_0000442655" evidence="3">
    <location>
        <begin position="19"/>
        <end position="79"/>
    </location>
</feature>
<feature type="chain" id="PRO_0000028912" description="Zinc metalloproteinase nas-7">
    <location>
        <begin position="80"/>
        <end position="382"/>
    </location>
</feature>
<feature type="domain" description="Peptidase M12A" evidence="6">
    <location>
        <begin position="80"/>
        <end position="273"/>
    </location>
</feature>
<feature type="domain" description="ShKT" evidence="5">
    <location>
        <begin position="348"/>
        <end position="382"/>
    </location>
</feature>
<feature type="active site" evidence="6">
    <location>
        <position position="172"/>
    </location>
</feature>
<feature type="binding site" evidence="6">
    <location>
        <position position="171"/>
    </location>
    <ligand>
        <name>Zn(2+)</name>
        <dbReference type="ChEBI" id="CHEBI:29105"/>
        <note>catalytic</note>
    </ligand>
</feature>
<feature type="binding site" evidence="6">
    <location>
        <position position="175"/>
    </location>
    <ligand>
        <name>Zn(2+)</name>
        <dbReference type="ChEBI" id="CHEBI:29105"/>
        <note>catalytic</note>
    </ligand>
</feature>
<feature type="binding site" evidence="6">
    <location>
        <position position="181"/>
    </location>
    <ligand>
        <name>Zn(2+)</name>
        <dbReference type="ChEBI" id="CHEBI:29105"/>
        <note>catalytic</note>
    </ligand>
</feature>
<feature type="disulfide bond" evidence="6">
    <location>
        <begin position="122"/>
        <end position="272"/>
    </location>
</feature>
<feature type="disulfide bond" evidence="6">
    <location>
        <begin position="144"/>
        <end position="163"/>
    </location>
</feature>
<feature type="disulfide bond" evidence="5">
    <location>
        <begin position="348"/>
        <end position="382"/>
    </location>
</feature>
<feature type="disulfide bond" evidence="5">
    <location>
        <begin position="355"/>
        <end position="375"/>
    </location>
</feature>
<feature type="disulfide bond" evidence="5">
    <location>
        <begin position="362"/>
        <end position="379"/>
    </location>
</feature>
<protein>
    <recommendedName>
        <fullName>Zinc metalloproteinase nas-7</fullName>
        <ecNumber evidence="1">3.4.24.-</ecNumber>
    </recommendedName>
    <alternativeName>
        <fullName>Nematode astacin 7</fullName>
    </alternativeName>
</protein>
<dbReference type="EC" id="3.4.24.-" evidence="1"/>
<dbReference type="EMBL" id="FO080415">
    <property type="protein sequence ID" value="CCD63532.1"/>
    <property type="molecule type" value="Genomic_DNA"/>
</dbReference>
<dbReference type="EMBL" id="AJ561203">
    <property type="protein sequence ID" value="CAD99206.1"/>
    <property type="molecule type" value="mRNA"/>
</dbReference>
<dbReference type="PIR" id="T15444">
    <property type="entry name" value="T15444"/>
</dbReference>
<dbReference type="RefSeq" id="NP_495552.2">
    <property type="nucleotide sequence ID" value="NM_063151.4"/>
</dbReference>
<dbReference type="SMR" id="P55113"/>
<dbReference type="BioGRID" id="47221">
    <property type="interactions" value="1"/>
</dbReference>
<dbReference type="FunCoup" id="P55113">
    <property type="interactions" value="3"/>
</dbReference>
<dbReference type="STRING" id="6239.C07D10.4.1"/>
<dbReference type="MEROPS" id="M12.A18"/>
<dbReference type="PaxDb" id="6239-C07D10.4"/>
<dbReference type="PeptideAtlas" id="P55113"/>
<dbReference type="EnsemblMetazoa" id="C07D10.4.1">
    <property type="protein sequence ID" value="C07D10.4.1"/>
    <property type="gene ID" value="WBGene00003526"/>
</dbReference>
<dbReference type="GeneID" id="182368"/>
<dbReference type="KEGG" id="cel:CELE_C07D10.4"/>
<dbReference type="UCSC" id="C07D10.4">
    <property type="organism name" value="c. elegans"/>
</dbReference>
<dbReference type="AGR" id="WB:WBGene00003526"/>
<dbReference type="CTD" id="182368"/>
<dbReference type="WormBase" id="C07D10.4">
    <property type="protein sequence ID" value="CE34663"/>
    <property type="gene ID" value="WBGene00003526"/>
    <property type="gene designation" value="nas-7"/>
</dbReference>
<dbReference type="eggNOG" id="KOG3714">
    <property type="taxonomic scope" value="Eukaryota"/>
</dbReference>
<dbReference type="GeneTree" id="ENSGT00970000196428"/>
<dbReference type="HOGENOM" id="CLU_017286_0_0_1"/>
<dbReference type="InParanoid" id="P55113"/>
<dbReference type="OMA" id="QCEDRIT"/>
<dbReference type="OrthoDB" id="291007at2759"/>
<dbReference type="PhylomeDB" id="P55113"/>
<dbReference type="PRO" id="PR:P55113"/>
<dbReference type="Proteomes" id="UP000001940">
    <property type="component" value="Chromosome II"/>
</dbReference>
<dbReference type="Bgee" id="WBGene00003526">
    <property type="expression patterns" value="Expressed in embryo and 3 other cell types or tissues"/>
</dbReference>
<dbReference type="GO" id="GO:0005576">
    <property type="term" value="C:extracellular region"/>
    <property type="evidence" value="ECO:0007669"/>
    <property type="project" value="UniProtKB-SubCell"/>
</dbReference>
<dbReference type="GO" id="GO:0004222">
    <property type="term" value="F:metalloendopeptidase activity"/>
    <property type="evidence" value="ECO:0000318"/>
    <property type="project" value="GO_Central"/>
</dbReference>
<dbReference type="GO" id="GO:0008270">
    <property type="term" value="F:zinc ion binding"/>
    <property type="evidence" value="ECO:0007669"/>
    <property type="project" value="InterPro"/>
</dbReference>
<dbReference type="GO" id="GO:0043050">
    <property type="term" value="P:nematode pharyngeal pumping"/>
    <property type="evidence" value="ECO:0000316"/>
    <property type="project" value="WormBase"/>
</dbReference>
<dbReference type="GO" id="GO:0160094">
    <property type="term" value="P:nematode pharynx development"/>
    <property type="evidence" value="ECO:0000316"/>
    <property type="project" value="WormBase"/>
</dbReference>
<dbReference type="GO" id="GO:0006508">
    <property type="term" value="P:proteolysis"/>
    <property type="evidence" value="ECO:0007669"/>
    <property type="project" value="UniProtKB-KW"/>
</dbReference>
<dbReference type="CDD" id="cd04280">
    <property type="entry name" value="ZnMc_astacin_like"/>
    <property type="match status" value="1"/>
</dbReference>
<dbReference type="FunFam" id="3.40.390.10:FF:000045">
    <property type="entry name" value="Metalloendopeptidase"/>
    <property type="match status" value="1"/>
</dbReference>
<dbReference type="Gene3D" id="3.40.390.10">
    <property type="entry name" value="Collagenase (Catalytic Domain)"/>
    <property type="match status" value="1"/>
</dbReference>
<dbReference type="Gene3D" id="1.10.10.1870">
    <property type="entry name" value="ShTK domain-like"/>
    <property type="match status" value="1"/>
</dbReference>
<dbReference type="InterPro" id="IPR034035">
    <property type="entry name" value="Astacin-like_dom"/>
</dbReference>
<dbReference type="InterPro" id="IPR017367">
    <property type="entry name" value="Caenorhab_nas-7/8"/>
</dbReference>
<dbReference type="InterPro" id="IPR024079">
    <property type="entry name" value="MetalloPept_cat_dom_sf"/>
</dbReference>
<dbReference type="InterPro" id="IPR001506">
    <property type="entry name" value="Peptidase_M12A"/>
</dbReference>
<dbReference type="InterPro" id="IPR006026">
    <property type="entry name" value="Peptidase_Metallo"/>
</dbReference>
<dbReference type="InterPro" id="IPR003582">
    <property type="entry name" value="ShKT_dom"/>
</dbReference>
<dbReference type="PANTHER" id="PTHR10127">
    <property type="entry name" value="DISCOIDIN, CUB, EGF, LAMININ , AND ZINC METALLOPROTEASE DOMAIN CONTAINING"/>
    <property type="match status" value="1"/>
</dbReference>
<dbReference type="PANTHER" id="PTHR10127:SF827">
    <property type="entry name" value="ZINC METALLOPROTEINASE NAS-7"/>
    <property type="match status" value="1"/>
</dbReference>
<dbReference type="Pfam" id="PF01400">
    <property type="entry name" value="Astacin"/>
    <property type="match status" value="1"/>
</dbReference>
<dbReference type="Pfam" id="PF01549">
    <property type="entry name" value="ShK"/>
    <property type="match status" value="1"/>
</dbReference>
<dbReference type="PIRSF" id="PIRSF038054">
    <property type="entry name" value="Nas7/Nas8_prd"/>
    <property type="match status" value="1"/>
</dbReference>
<dbReference type="PRINTS" id="PR00480">
    <property type="entry name" value="ASTACIN"/>
</dbReference>
<dbReference type="SMART" id="SM00254">
    <property type="entry name" value="ShKT"/>
    <property type="match status" value="1"/>
</dbReference>
<dbReference type="SMART" id="SM00235">
    <property type="entry name" value="ZnMc"/>
    <property type="match status" value="1"/>
</dbReference>
<dbReference type="SUPFAM" id="SSF55486">
    <property type="entry name" value="Metalloproteases ('zincins'), catalytic domain"/>
    <property type="match status" value="1"/>
</dbReference>
<dbReference type="PROSITE" id="PS51864">
    <property type="entry name" value="ASTACIN"/>
    <property type="match status" value="1"/>
</dbReference>
<dbReference type="PROSITE" id="PS51670">
    <property type="entry name" value="SHKT"/>
    <property type="match status" value="1"/>
</dbReference>
<dbReference type="PROSITE" id="PS00142">
    <property type="entry name" value="ZINC_PROTEASE"/>
    <property type="match status" value="1"/>
</dbReference>
<accession>P55113</accession>
<accession>Q7Z0N5</accession>